<sequence length="707" mass="81573">MSPFLRIGLSNFDCGTCQACQGEAVNPYCAVLVKEYVESENGQMYIQKKPTMYPPWDSTFDAHINKGRVMQIIVKGKNVDLISETTVELYSLAERCRKNNGRTEIWLELKPQGRMLMNARYFLEMSDTKDMSEFENEGFFALHQRRGAIKQAKVHHVKCHEFTATFFPQPTFCSVCHEFVWGLNKQGYQCRQCNAAIHKKCIDKVIAKCTGSAINSRETMFHKERFKIDMPHRFKVYNYKSPTFCEHCGTLLWGLARQGLKCDACGMNVHHRCQTKVANLCGINQKLMAEALAMIESTQQARSLRDSEHIFREGPVEIGLPCSTKNETRPPCVPTPGKREPQGISWDSPLDGSNKSAGPPEPEVSMRRTSLQLKLKIDDFILHKMLGKGSFGKVFLAEFKRTNQFFAIKALKKDVVLMDDDVECTMVEKRVLSLAWEHPFLTHMFCTFQTKENLFFVMEYLNGGDLMYHIQSCHKFDLSRATFYAAEVILGLQFLHSKGIVYRDLKLDNILLDRDGHIKIADFGMCKENMLGDAKTNTFCGTPDYIAPEILLGQKYNHSVDWWSFGVLVYEMLIGQSPFHGQDEEELFHSIRMDNPFYPRWLEREAKDLLVKLFVREPEKRLGVRGDIRQHPLFREINWEELERKEIDPPFRPKVKSPYDCSNFDKEFLSEKPRLSFADRALINSMDQNMFSNFSFINPGMETLICS</sequence>
<proteinExistence type="evidence at protein level"/>
<gene>
    <name type="primary">Prkcq</name>
    <name type="synonym">Pkcq</name>
</gene>
<comment type="function">
    <text evidence="2 10 11 12 13 14 15">Calcium-independent, phospholipid- and diacylglycerol (DAG)-dependent serine/threonine-protein kinase that mediates non-redundant functions in T-cell receptor (TCR) signaling, including T-cells activation, proliferation, differentiation and survival, by mediating activation of multiple transcription factors such as NF-kappa-B, JUN, NFATC1 and NFATC2. In TCR-CD3/CD28-co-stimulated T-cells, is required for the activation of NF-kappa-B and JUN, which in turn are essential for IL2 production, and participates in the calcium-dependent NFATC1 and NFATC2 transactivation. Mediates the activation of the canonical NF-kappa-B pathway (NFKB1) by direct phosphorylation of CARD11 on several serine residues, inducing CARD11 association with lipid rafts and recruitment of the BCL10-MALT1 complex, which then activates IKK complex, resulting in nuclear translocation and activation of NFKB1. May also play an indirect role in activation of the non-canonical NF-kappa-B (NFKB2) pathway. In the signaling pathway leading to JUN activation, acts by phosphorylating the mediator STK39/SPAK and may not act through MAP kinases signaling. Plays a critical role in TCR/CD28-induced NFATC1 and NFATC2 transactivation by participating in the regulation of reduced inositol 1,4,5-trisphosphate generation and intracellular calcium mobilization. After costimulation of T-cells through CD28 can phosphorylate CBLB and is required for the ubiquitination and subsequent degradation of CBLB, which is a prerequisite for the activation of TCR. During T-cells differentiation, plays an important role in the development of T-helper 2 (Th2) cells following immune and inflammatory responses, and, in the development of inflammatory autoimmune diseases, is necessary for the activation of IL17-producing Th17 cells. May play a minor role in Th1 response. Upon TCR stimulation, mediates T-cell protective survival signal by phosphorylating BAD, thus protecting T-cells from BAD-induced apoptosis, and by up-regulating BCL-X(L)/BCL2L1 levels through NF-kappa-B and JUN pathways. In platelets, regulates signal transduction downstream of the ITGA2B, CD36/GP4, F2R/PAR1 and F2RL3/PAR4 receptors, playing a positive role in 'outside-in' signaling and granule secretion signal transduction. May relay signals from the activated ITGA2B receptor by regulating the uncoupling of WASP and WIPF1, thereby permitting the regulation of actin filament nucleation and branching activity of the Arp2/3 complex. May mediate inhibitory effects of free fatty acids on insulin signaling by phosphorylating IRS1, which in turn blocks IRS1 tyrosine phosphorylation and downstream activation of the PI3K/AKT pathway. Phosphorylates MSN (moesin) in the presence of phosphatidylglycerol or phosphatidylinositol. Phosphorylates PDPK1 at 'Ser-504' and 'Ser-532' and negatively regulates its ability to phosphorylate PKB/AKT1. Phosphorylates CCDC88A/GIV and inhibits its guanine nucleotide exchange factor activity (By similarity). Phosphorylates and activates LRRK1, which phosphorylates RAB proteins involved in intracellular trafficking (By similarity).</text>
</comment>
<comment type="catalytic activity">
    <reaction evidence="2">
        <text>L-seryl-[protein] + ATP = O-phospho-L-seryl-[protein] + ADP + H(+)</text>
        <dbReference type="Rhea" id="RHEA:17989"/>
        <dbReference type="Rhea" id="RHEA-COMP:9863"/>
        <dbReference type="Rhea" id="RHEA-COMP:11604"/>
        <dbReference type="ChEBI" id="CHEBI:15378"/>
        <dbReference type="ChEBI" id="CHEBI:29999"/>
        <dbReference type="ChEBI" id="CHEBI:30616"/>
        <dbReference type="ChEBI" id="CHEBI:83421"/>
        <dbReference type="ChEBI" id="CHEBI:456216"/>
        <dbReference type="EC" id="2.7.11.13"/>
    </reaction>
</comment>
<comment type="catalytic activity">
    <reaction evidence="2">
        <text>L-threonyl-[protein] + ATP = O-phospho-L-threonyl-[protein] + ADP + H(+)</text>
        <dbReference type="Rhea" id="RHEA:46608"/>
        <dbReference type="Rhea" id="RHEA-COMP:11060"/>
        <dbReference type="Rhea" id="RHEA-COMP:11605"/>
        <dbReference type="ChEBI" id="CHEBI:15378"/>
        <dbReference type="ChEBI" id="CHEBI:30013"/>
        <dbReference type="ChEBI" id="CHEBI:30616"/>
        <dbReference type="ChEBI" id="CHEBI:61977"/>
        <dbReference type="ChEBI" id="CHEBI:456216"/>
        <dbReference type="EC" id="2.7.11.13"/>
    </reaction>
</comment>
<comment type="cofactor">
    <cofactor>
        <name>Mg(2+)</name>
        <dbReference type="ChEBI" id="CHEBI:18420"/>
    </cofactor>
</comment>
<comment type="activity regulation">
    <text evidence="1">Novel PKCs (PRKCD, PRKCE, PRKCH and PRKCQ) are calcium-insensitive, but activated by diacylglycerol (DAG) and phosphatidylserine. Three specific sites; Thr-538 (activation loop of the kinase domain), Ser-676 (turn motif) and Ser-695 (hydrophobic region), need to be phosphorylated for its full activation (By similarity).</text>
</comment>
<comment type="subunit">
    <text evidence="2">Part of a membrane raft complex composed at least of BCL10, CARD11, MALT1 and IKBKB (By similarity). Interacts with GLRX3 (via N-terminus) (By similarity). Interacts with ECT2 (By similarity). Interacts with CCDC88A/GIV; the interaction leads to phosphorylation of CCDC88A and inhibition of its guanine nucleotide exchange factor activity (By similarity). Interacts with CD28 (By similarity).</text>
</comment>
<comment type="interaction">
    <interactant intactId="EBI-2639157">
        <id>Q02111</id>
    </interactant>
    <interactant intactId="EBI-5324222">
        <id>Q99JP0</id>
        <label>Map4k3</label>
    </interactant>
    <organismsDiffer>false</organismsDiffer>
    <experiments>2</experiments>
</comment>
<comment type="interaction">
    <interactant intactId="EBI-2639157">
        <id>Q02111</id>
    </interactant>
    <interactant intactId="EBI-2639084">
        <id>P70257-2</id>
        <label>Nfix</label>
    </interactant>
    <organismsDiffer>false</organismsDiffer>
    <experiments>3</experiments>
</comment>
<comment type="interaction">
    <interactant intactId="EBI-2639157">
        <id>Q02111</id>
    </interactant>
    <interactant intactId="EBI-1758170">
        <id>Q8IVH8</id>
        <label>MAP4K3</label>
    </interactant>
    <organismsDiffer>true</organismsDiffer>
    <experiments>4</experiments>
</comment>
<comment type="subcellular location">
    <subcellularLocation>
        <location evidence="1">Cytoplasm</location>
    </subcellularLocation>
    <subcellularLocation>
        <location evidence="1">Cell membrane</location>
        <topology>Peripheral membrane protein</topology>
    </subcellularLocation>
    <text evidence="1">In resting T-cells, mostly localized in cytoplasm. In response to TCR stimulation, associates with lipid rafts and then localizes in the immunological synapse (By similarity).</text>
</comment>
<comment type="tissue specificity">
    <text evidence="10 12">T-lymphocytes and skeletal muscle.</text>
</comment>
<comment type="domain">
    <text>The C1 domain, containing the phorbol ester/DAG-type region 1 (C1A) and 2 (C1B), is the diacylglycerol sensor and the C2 domain is a non-calcium binding domain.</text>
</comment>
<comment type="PTM">
    <text evidence="1">Autophosphorylation at Thr-219 is required for targeting to the TCR and cellular function of PRKCQ upon antigen receptor ligation. Following TCR stimulation, phosphorylated at Tyr-90 and Ser-685 (By similarity).</text>
</comment>
<comment type="similarity">
    <text evidence="16">Belongs to the protein kinase superfamily. AGC Ser/Thr protein kinase family. PKC subfamily.</text>
</comment>
<accession>Q02111</accession>
<protein>
    <recommendedName>
        <fullName>Protein kinase C theta type</fullName>
        <ecNumber evidence="2">2.7.11.13</ecNumber>
    </recommendedName>
    <alternativeName>
        <fullName>nPKC-theta</fullName>
    </alternativeName>
</protein>
<feature type="chain" id="PRO_0000055709" description="Protein kinase C theta type">
    <location>
        <begin position="1"/>
        <end position="707"/>
    </location>
</feature>
<feature type="domain" description="C2" evidence="4">
    <location>
        <begin position="1"/>
        <end position="107"/>
    </location>
</feature>
<feature type="domain" description="Protein kinase" evidence="5">
    <location>
        <begin position="380"/>
        <end position="634"/>
    </location>
</feature>
<feature type="domain" description="AGC-kinase C-terminal" evidence="7">
    <location>
        <begin position="635"/>
        <end position="706"/>
    </location>
</feature>
<feature type="zinc finger region" description="Phorbol-ester/DAG-type 1" evidence="6">
    <location>
        <begin position="159"/>
        <end position="209"/>
    </location>
</feature>
<feature type="zinc finger region" description="Phorbol-ester/DAG-type 2" evidence="6">
    <location>
        <begin position="231"/>
        <end position="281"/>
    </location>
</feature>
<feature type="region of interest" description="Disordered" evidence="9">
    <location>
        <begin position="327"/>
        <end position="365"/>
    </location>
</feature>
<feature type="active site" description="Proton acceptor" evidence="5 8">
    <location>
        <position position="504"/>
    </location>
</feature>
<feature type="binding site" evidence="5">
    <location>
        <begin position="386"/>
        <end position="394"/>
    </location>
    <ligand>
        <name>ATP</name>
        <dbReference type="ChEBI" id="CHEBI:30616"/>
    </ligand>
</feature>
<feature type="binding site" evidence="5">
    <location>
        <position position="409"/>
    </location>
    <ligand>
        <name>ATP</name>
        <dbReference type="ChEBI" id="CHEBI:30616"/>
    </ligand>
</feature>
<feature type="modified residue" description="Phosphotyrosine; by LCK" evidence="2">
    <location>
        <position position="90"/>
    </location>
</feature>
<feature type="modified residue" description="Phosphothreonine; by autocatalysis" evidence="2">
    <location>
        <position position="219"/>
    </location>
</feature>
<feature type="modified residue" description="Phosphoserine" evidence="2">
    <location>
        <position position="348"/>
    </location>
</feature>
<feature type="modified residue" description="Phosphothreonine; by PDPK1" evidence="2">
    <location>
        <position position="538"/>
    </location>
</feature>
<feature type="modified residue" description="Phosphoserine; by autocatalysis" evidence="2 3">
    <location>
        <position position="676"/>
    </location>
</feature>
<feature type="modified residue" description="Phosphoserine" evidence="2">
    <location>
        <position position="685"/>
    </location>
</feature>
<feature type="modified residue" description="Phosphoserine; by autocatalysis" evidence="2 3">
    <location>
        <position position="695"/>
    </location>
</feature>
<feature type="strand" evidence="17">
    <location>
        <begin position="234"/>
        <end position="237"/>
    </location>
</feature>
<feature type="turn" evidence="17">
    <location>
        <begin position="246"/>
        <end position="248"/>
    </location>
</feature>
<feature type="strand" evidence="17">
    <location>
        <begin position="254"/>
        <end position="256"/>
    </location>
</feature>
<feature type="strand" evidence="17">
    <location>
        <begin position="259"/>
        <end position="262"/>
    </location>
</feature>
<feature type="turn" evidence="17">
    <location>
        <begin position="263"/>
        <end position="265"/>
    </location>
</feature>
<feature type="helix" evidence="17">
    <location>
        <begin position="271"/>
        <end position="276"/>
    </location>
</feature>
<reference key="1">
    <citation type="journal article" date="1992" name="Mol. Cell. Biol.">
        <title>A new member of the protein kinase C family, nPKC theta, predominantly expressed in skeletal muscle.</title>
        <authorList>
            <person name="Osada S."/>
            <person name="Mizuno K."/>
            <person name="Saido T.C."/>
            <person name="Suzuki K."/>
            <person name="Kuroki T."/>
            <person name="Ohno S."/>
        </authorList>
    </citation>
    <scope>NUCLEOTIDE SEQUENCE [MRNA]</scope>
    <scope>FUNCTION</scope>
    <scope>AUTOPHOSPHORYLATION</scope>
    <scope>TISSUE SPECIFICITY</scope>
</reference>
<reference key="2">
    <citation type="journal article" date="2000" name="Nature">
        <title>PKC-theta is required for TCR-induced NF-kappaB activation in mature but not immature T lymphocytes.</title>
        <authorList>
            <person name="Sun Z."/>
            <person name="Arendt C.W."/>
            <person name="Ellmeier W."/>
            <person name="Schaeffer E.M."/>
            <person name="Sunshine M.J."/>
            <person name="Gandhi L."/>
            <person name="Annes J."/>
            <person name="Petrzilka D."/>
            <person name="Kupfer A."/>
            <person name="Schwartzberg P.L."/>
            <person name="Littman D.R."/>
        </authorList>
    </citation>
    <scope>FUNCTION IN ACTIVATION OF NF-KAPPA-B</scope>
    <scope>TISSUE SPECIFICITY</scope>
</reference>
<reference key="3">
    <citation type="journal article" date="2003" name="J. Exp. Med.">
        <title>Protein kinase C theta affects Ca2+ mobilization and NFAT cell activation in primary mouse T cells.</title>
        <authorList>
            <person name="Pfeifhofer C."/>
            <person name="Kofler K."/>
            <person name="Gruber T."/>
            <person name="Tabrizi N.G."/>
            <person name="Lutz C."/>
            <person name="Maly K."/>
            <person name="Leitges M."/>
            <person name="Baier G."/>
        </authorList>
    </citation>
    <scope>FUNCTION IN ACTIVATION OF NFATC1 AND NFATC2</scope>
</reference>
<reference key="4">
    <citation type="journal article" date="2004" name="J. Exp. Med.">
        <title>Protein kinase C theta is critical for the development of in vivo T helper (Th)2 cell but not Th1 cell responses.</title>
        <authorList>
            <person name="Marsland B.J."/>
            <person name="Soos T.J."/>
            <person name="Spaeth G."/>
            <person name="Littman D.R."/>
            <person name="Kopf M."/>
        </authorList>
    </citation>
    <scope>FUNCTION IN T-HELPER 2 ACTIVATION</scope>
</reference>
<reference key="5">
    <citation type="journal article" date="2006" name="J. Immunol.">
        <title>Resistance to experimental autoimmune encephalomyelitis and impaired IL-17 production in protein kinase C theta-deficient mice.</title>
        <authorList>
            <person name="Tan S.L."/>
            <person name="Zhao J."/>
            <person name="Bi C."/>
            <person name="Chen X.C."/>
            <person name="Hepburn D.L."/>
            <person name="Wang J."/>
            <person name="Sedgwick J.D."/>
            <person name="Chintalacharuvu S.R."/>
            <person name="Na S."/>
        </authorList>
    </citation>
    <scope>FUNCTION IN T-HELPER 17 ACTIVATION</scope>
</reference>
<reference key="6">
    <citation type="journal article" date="2009" name="J. Biol. Chem.">
        <title>Protein kinase C theta (PKCtheta)-dependent phosphorylation of PDK1 at Ser504 and Ser532 contributes to palmitate-induced insulin resistance.</title>
        <authorList>
            <person name="Wang C."/>
            <person name="Liu M."/>
            <person name="Riojas R.A."/>
            <person name="Xin X."/>
            <person name="Gao Z."/>
            <person name="Zeng R."/>
            <person name="Wu J."/>
            <person name="Dong L.Q."/>
            <person name="Liu F."/>
        </authorList>
    </citation>
    <scope>FUNCTION IN PHOSPHORYLATION OF PDPK1</scope>
</reference>
<reference key="7">
    <citation type="journal article" date="2010" name="Cell">
        <title>A tissue-specific atlas of mouse protein phosphorylation and expression.</title>
        <authorList>
            <person name="Huttlin E.L."/>
            <person name="Jedrychowski M.P."/>
            <person name="Elias J.E."/>
            <person name="Goswami T."/>
            <person name="Rad R."/>
            <person name="Beausoleil S.A."/>
            <person name="Villen J."/>
            <person name="Haas W."/>
            <person name="Sowa M.E."/>
            <person name="Gygi S.P."/>
        </authorList>
    </citation>
    <scope>IDENTIFICATION BY MASS SPECTROMETRY [LARGE SCALE ANALYSIS]</scope>
    <source>
        <tissue>Brain</tissue>
        <tissue>Kidney</tissue>
        <tissue>Lung</tissue>
    </source>
</reference>
<evidence type="ECO:0000250" key="1"/>
<evidence type="ECO:0000250" key="2">
    <source>
        <dbReference type="UniProtKB" id="Q04759"/>
    </source>
</evidence>
<evidence type="ECO:0000255" key="3"/>
<evidence type="ECO:0000255" key="4">
    <source>
        <dbReference type="PROSITE-ProRule" id="PRU00041"/>
    </source>
</evidence>
<evidence type="ECO:0000255" key="5">
    <source>
        <dbReference type="PROSITE-ProRule" id="PRU00159"/>
    </source>
</evidence>
<evidence type="ECO:0000255" key="6">
    <source>
        <dbReference type="PROSITE-ProRule" id="PRU00226"/>
    </source>
</evidence>
<evidence type="ECO:0000255" key="7">
    <source>
        <dbReference type="PROSITE-ProRule" id="PRU00618"/>
    </source>
</evidence>
<evidence type="ECO:0000255" key="8">
    <source>
        <dbReference type="PROSITE-ProRule" id="PRU10027"/>
    </source>
</evidence>
<evidence type="ECO:0000256" key="9">
    <source>
        <dbReference type="SAM" id="MobiDB-lite"/>
    </source>
</evidence>
<evidence type="ECO:0000269" key="10">
    <source>
    </source>
</evidence>
<evidence type="ECO:0000269" key="11">
    <source>
    </source>
</evidence>
<evidence type="ECO:0000269" key="12">
    <source>
    </source>
</evidence>
<evidence type="ECO:0000269" key="13">
    <source>
    </source>
</evidence>
<evidence type="ECO:0000269" key="14">
    <source>
    </source>
</evidence>
<evidence type="ECO:0000269" key="15">
    <source>
    </source>
</evidence>
<evidence type="ECO:0000305" key="16"/>
<evidence type="ECO:0007829" key="17">
    <source>
        <dbReference type="PDB" id="4FKD"/>
    </source>
</evidence>
<organism>
    <name type="scientific">Mus musculus</name>
    <name type="common">Mouse</name>
    <dbReference type="NCBI Taxonomy" id="10090"/>
    <lineage>
        <taxon>Eukaryota</taxon>
        <taxon>Metazoa</taxon>
        <taxon>Chordata</taxon>
        <taxon>Craniata</taxon>
        <taxon>Vertebrata</taxon>
        <taxon>Euteleostomi</taxon>
        <taxon>Mammalia</taxon>
        <taxon>Eutheria</taxon>
        <taxon>Euarchontoglires</taxon>
        <taxon>Glires</taxon>
        <taxon>Rodentia</taxon>
        <taxon>Myomorpha</taxon>
        <taxon>Muroidea</taxon>
        <taxon>Muridae</taxon>
        <taxon>Murinae</taxon>
        <taxon>Mus</taxon>
        <taxon>Mus</taxon>
    </lineage>
</organism>
<name>KPCT_MOUSE</name>
<dbReference type="EC" id="2.7.11.13" evidence="2"/>
<dbReference type="EMBL" id="D11091">
    <property type="protein sequence ID" value="BAA01864.1"/>
    <property type="molecule type" value="mRNA"/>
</dbReference>
<dbReference type="CCDS" id="CCDS15682.1"/>
<dbReference type="PIR" id="A44500">
    <property type="entry name" value="A44500"/>
</dbReference>
<dbReference type="RefSeq" id="NP_032885.1">
    <property type="nucleotide sequence ID" value="NM_008859.3"/>
</dbReference>
<dbReference type="PDB" id="4FKD">
    <property type="method" value="X-ray"/>
    <property type="resolution" value="1.63 A"/>
    <property type="chains" value="A=232-281"/>
</dbReference>
<dbReference type="PDBsum" id="4FKD"/>
<dbReference type="SMR" id="Q02111"/>
<dbReference type="BioGRID" id="202202">
    <property type="interactions" value="6"/>
</dbReference>
<dbReference type="DIP" id="DIP-55947N"/>
<dbReference type="FunCoup" id="Q02111">
    <property type="interactions" value="495"/>
</dbReference>
<dbReference type="IntAct" id="Q02111">
    <property type="interactions" value="6"/>
</dbReference>
<dbReference type="STRING" id="10090.ENSMUSP00000028118"/>
<dbReference type="BindingDB" id="Q02111"/>
<dbReference type="ChEMBL" id="CHEMBL1075295"/>
<dbReference type="GlyGen" id="Q02111">
    <property type="glycosylation" value="1 site"/>
</dbReference>
<dbReference type="iPTMnet" id="Q02111"/>
<dbReference type="PhosphoSitePlus" id="Q02111"/>
<dbReference type="jPOST" id="Q02111"/>
<dbReference type="PaxDb" id="10090-ENSMUSP00000028118"/>
<dbReference type="ProteomicsDB" id="264864"/>
<dbReference type="Antibodypedia" id="10940">
    <property type="antibodies" value="856 antibodies from 41 providers"/>
</dbReference>
<dbReference type="DNASU" id="18761"/>
<dbReference type="Ensembl" id="ENSMUST00000028118.9">
    <property type="protein sequence ID" value="ENSMUSP00000028118.4"/>
    <property type="gene ID" value="ENSMUSG00000026778.14"/>
</dbReference>
<dbReference type="GeneID" id="18761"/>
<dbReference type="KEGG" id="mmu:18761"/>
<dbReference type="UCSC" id="uc008iic.1">
    <property type="organism name" value="mouse"/>
</dbReference>
<dbReference type="AGR" id="MGI:97601"/>
<dbReference type="CTD" id="5588"/>
<dbReference type="MGI" id="MGI:97601">
    <property type="gene designation" value="Prkcq"/>
</dbReference>
<dbReference type="VEuPathDB" id="HostDB:ENSMUSG00000026778"/>
<dbReference type="eggNOG" id="KOG0694">
    <property type="taxonomic scope" value="Eukaryota"/>
</dbReference>
<dbReference type="GeneTree" id="ENSGT00940000157638"/>
<dbReference type="HOGENOM" id="CLU_000288_54_4_1"/>
<dbReference type="InParanoid" id="Q02111"/>
<dbReference type="OMA" id="EIWIELK"/>
<dbReference type="OrthoDB" id="63267at2759"/>
<dbReference type="PhylomeDB" id="Q02111"/>
<dbReference type="TreeFam" id="TF102004"/>
<dbReference type="Reactome" id="R-MMU-111465">
    <property type="pathway name" value="Apoptotic cleavage of cellular proteins"/>
</dbReference>
<dbReference type="Reactome" id="R-MMU-114508">
    <property type="pathway name" value="Effects of PIP2 hydrolysis"/>
</dbReference>
<dbReference type="Reactome" id="R-MMU-202424">
    <property type="pathway name" value="Downstream TCR signaling"/>
</dbReference>
<dbReference type="Reactome" id="R-MMU-2871837">
    <property type="pathway name" value="FCERI mediated NF-kB activation"/>
</dbReference>
<dbReference type="Reactome" id="R-MMU-373752">
    <property type="pathway name" value="Netrin-1 signaling"/>
</dbReference>
<dbReference type="Reactome" id="R-MMU-9648002">
    <property type="pathway name" value="RAS processing"/>
</dbReference>
<dbReference type="BioGRID-ORCS" id="18761">
    <property type="hits" value="3 hits in 81 CRISPR screens"/>
</dbReference>
<dbReference type="CD-CODE" id="01CA17F3">
    <property type="entry name" value="Centrosome"/>
</dbReference>
<dbReference type="EvolutionaryTrace" id="Q02111"/>
<dbReference type="PRO" id="PR:Q02111"/>
<dbReference type="Proteomes" id="UP000000589">
    <property type="component" value="Chromosome 2"/>
</dbReference>
<dbReference type="RNAct" id="Q02111">
    <property type="molecule type" value="protein"/>
</dbReference>
<dbReference type="Bgee" id="ENSMUSG00000026778">
    <property type="expression patterns" value="Expressed in habenula and 171 other cell types or tissues"/>
</dbReference>
<dbReference type="ExpressionAtlas" id="Q02111">
    <property type="expression patterns" value="baseline and differential"/>
</dbReference>
<dbReference type="GO" id="GO:0016235">
    <property type="term" value="C:aggresome"/>
    <property type="evidence" value="ECO:0007669"/>
    <property type="project" value="Ensembl"/>
</dbReference>
<dbReference type="GO" id="GO:0034451">
    <property type="term" value="C:centriolar satellite"/>
    <property type="evidence" value="ECO:0007669"/>
    <property type="project" value="Ensembl"/>
</dbReference>
<dbReference type="GO" id="GO:0005737">
    <property type="term" value="C:cytoplasm"/>
    <property type="evidence" value="ECO:0000314"/>
    <property type="project" value="MGI"/>
</dbReference>
<dbReference type="GO" id="GO:0001772">
    <property type="term" value="C:immunological synapse"/>
    <property type="evidence" value="ECO:0000314"/>
    <property type="project" value="MGI"/>
</dbReference>
<dbReference type="GO" id="GO:0005886">
    <property type="term" value="C:plasma membrane"/>
    <property type="evidence" value="ECO:0000314"/>
    <property type="project" value="MGI"/>
</dbReference>
<dbReference type="GO" id="GO:0005524">
    <property type="term" value="F:ATP binding"/>
    <property type="evidence" value="ECO:0007669"/>
    <property type="project" value="UniProtKB-KW"/>
</dbReference>
<dbReference type="GO" id="GO:0004697">
    <property type="term" value="F:diacylglycerol-dependent serine/threonine kinase activity"/>
    <property type="evidence" value="ECO:0000314"/>
    <property type="project" value="MGI"/>
</dbReference>
<dbReference type="GO" id="GO:0106310">
    <property type="term" value="F:protein serine kinase activity"/>
    <property type="evidence" value="ECO:0007669"/>
    <property type="project" value="RHEA"/>
</dbReference>
<dbReference type="GO" id="GO:0008270">
    <property type="term" value="F:zinc ion binding"/>
    <property type="evidence" value="ECO:0007669"/>
    <property type="project" value="UniProtKB-KW"/>
</dbReference>
<dbReference type="GO" id="GO:0035739">
    <property type="term" value="P:CD4-positive, alpha-beta T cell proliferation"/>
    <property type="evidence" value="ECO:0000315"/>
    <property type="project" value="MGI"/>
</dbReference>
<dbReference type="GO" id="GO:0060326">
    <property type="term" value="P:cell chemotaxis"/>
    <property type="evidence" value="ECO:0007669"/>
    <property type="project" value="Ensembl"/>
</dbReference>
<dbReference type="GO" id="GO:0006954">
    <property type="term" value="P:inflammatory response"/>
    <property type="evidence" value="ECO:0007669"/>
    <property type="project" value="UniProtKB-KW"/>
</dbReference>
<dbReference type="GO" id="GO:0035556">
    <property type="term" value="P:intracellular signal transduction"/>
    <property type="evidence" value="ECO:0000315"/>
    <property type="project" value="MGI"/>
</dbReference>
<dbReference type="GO" id="GO:0006509">
    <property type="term" value="P:membrane protein ectodomain proteolysis"/>
    <property type="evidence" value="ECO:0000314"/>
    <property type="project" value="BHF-UCL"/>
</dbReference>
<dbReference type="GO" id="GO:0046627">
    <property type="term" value="P:negative regulation of insulin receptor signaling pathway"/>
    <property type="evidence" value="ECO:0000250"/>
    <property type="project" value="UniProtKB"/>
</dbReference>
<dbReference type="GO" id="GO:0070233">
    <property type="term" value="P:negative regulation of T cell apoptotic process"/>
    <property type="evidence" value="ECO:0000250"/>
    <property type="project" value="UniProtKB"/>
</dbReference>
<dbReference type="GO" id="GO:2000563">
    <property type="term" value="P:positive regulation of CD4-positive, alpha-beta T cell proliferation"/>
    <property type="evidence" value="ECO:0000315"/>
    <property type="project" value="MGI"/>
</dbReference>
<dbReference type="GO" id="GO:0032740">
    <property type="term" value="P:positive regulation of interleukin-17 production"/>
    <property type="evidence" value="ECO:0000315"/>
    <property type="project" value="UniProtKB"/>
</dbReference>
<dbReference type="GO" id="GO:0032743">
    <property type="term" value="P:positive regulation of interleukin-2 production"/>
    <property type="evidence" value="ECO:0000315"/>
    <property type="project" value="MGI"/>
</dbReference>
<dbReference type="GO" id="GO:0032753">
    <property type="term" value="P:positive regulation of interleukin-4 production"/>
    <property type="evidence" value="ECO:0000315"/>
    <property type="project" value="UniProtKB"/>
</dbReference>
<dbReference type="GO" id="GO:0051092">
    <property type="term" value="P:positive regulation of NF-kappaB transcription factor activity"/>
    <property type="evidence" value="ECO:0000315"/>
    <property type="project" value="UniProtKB"/>
</dbReference>
<dbReference type="GO" id="GO:0050870">
    <property type="term" value="P:positive regulation of T cell activation"/>
    <property type="evidence" value="ECO:0000315"/>
    <property type="project" value="UniProtKB"/>
</dbReference>
<dbReference type="GO" id="GO:2000318">
    <property type="term" value="P:positive regulation of T-helper 17 type immune response"/>
    <property type="evidence" value="ECO:0000315"/>
    <property type="project" value="UniProtKB"/>
</dbReference>
<dbReference type="GO" id="GO:2000570">
    <property type="term" value="P:positive regulation of T-helper 2 cell activation"/>
    <property type="evidence" value="ECO:0000315"/>
    <property type="project" value="UniProtKB"/>
</dbReference>
<dbReference type="GO" id="GO:0032206">
    <property type="term" value="P:positive regulation of telomere maintenance"/>
    <property type="evidence" value="ECO:0007669"/>
    <property type="project" value="Ensembl"/>
</dbReference>
<dbReference type="GO" id="GO:0006355">
    <property type="term" value="P:regulation of DNA-templated transcription"/>
    <property type="evidence" value="ECO:0000315"/>
    <property type="project" value="UniProtKB"/>
</dbReference>
<dbReference type="GO" id="GO:0090330">
    <property type="term" value="P:regulation of platelet aggregation"/>
    <property type="evidence" value="ECO:0000315"/>
    <property type="project" value="UniProtKB"/>
</dbReference>
<dbReference type="GO" id="GO:0042110">
    <property type="term" value="P:T cell activation"/>
    <property type="evidence" value="ECO:0000315"/>
    <property type="project" value="MGI"/>
</dbReference>
<dbReference type="CDD" id="cd20834">
    <property type="entry name" value="C1_nPKC_theta-like_rpt1"/>
    <property type="match status" value="1"/>
</dbReference>
<dbReference type="CDD" id="cd20837">
    <property type="entry name" value="C1_nPKC_theta-like_rpt2"/>
    <property type="match status" value="1"/>
</dbReference>
<dbReference type="CDD" id="cd05619">
    <property type="entry name" value="STKc_nPKC_theta"/>
    <property type="match status" value="1"/>
</dbReference>
<dbReference type="FunFam" id="3.30.200.20:FF:000360">
    <property type="entry name" value="Protein kinase C"/>
    <property type="match status" value="1"/>
</dbReference>
<dbReference type="FunFam" id="3.30.60.20:FF:000003">
    <property type="entry name" value="Protein kinase C delta"/>
    <property type="match status" value="1"/>
</dbReference>
<dbReference type="FunFam" id="2.60.40.150:FF:000049">
    <property type="entry name" value="Protein kinase C delta type"/>
    <property type="match status" value="1"/>
</dbReference>
<dbReference type="FunFam" id="3.30.60.20:FF:000008">
    <property type="entry name" value="Protein kinase C theta"/>
    <property type="match status" value="1"/>
</dbReference>
<dbReference type="FunFam" id="1.10.510.10:FF:000150">
    <property type="entry name" value="Protein kinase C, theta"/>
    <property type="match status" value="1"/>
</dbReference>
<dbReference type="Gene3D" id="3.30.60.20">
    <property type="match status" value="2"/>
</dbReference>
<dbReference type="Gene3D" id="2.60.40.150">
    <property type="entry name" value="C2 domain"/>
    <property type="match status" value="1"/>
</dbReference>
<dbReference type="Gene3D" id="3.30.200.20">
    <property type="entry name" value="Phosphorylase Kinase, domain 1"/>
    <property type="match status" value="1"/>
</dbReference>
<dbReference type="Gene3D" id="1.10.510.10">
    <property type="entry name" value="Transferase(Phosphotransferase) domain 1"/>
    <property type="match status" value="1"/>
</dbReference>
<dbReference type="InterPro" id="IPR000961">
    <property type="entry name" value="AGC-kinase_C"/>
</dbReference>
<dbReference type="InterPro" id="IPR046349">
    <property type="entry name" value="C1-like_sf"/>
</dbReference>
<dbReference type="InterPro" id="IPR000008">
    <property type="entry name" value="C2_dom"/>
</dbReference>
<dbReference type="InterPro" id="IPR035892">
    <property type="entry name" value="C2_domain_sf"/>
</dbReference>
<dbReference type="InterPro" id="IPR020454">
    <property type="entry name" value="DAG/PE-bd"/>
</dbReference>
<dbReference type="InterPro" id="IPR011009">
    <property type="entry name" value="Kinase-like_dom_sf"/>
</dbReference>
<dbReference type="InterPro" id="IPR034668">
    <property type="entry name" value="nPKC_theta"/>
</dbReference>
<dbReference type="InterPro" id="IPR002219">
    <property type="entry name" value="PE/DAG-bd"/>
</dbReference>
<dbReference type="InterPro" id="IPR027264">
    <property type="entry name" value="PKC_theta"/>
</dbReference>
<dbReference type="InterPro" id="IPR017892">
    <property type="entry name" value="Pkinase_C"/>
</dbReference>
<dbReference type="InterPro" id="IPR014376">
    <property type="entry name" value="Prot_kin_PKC_delta"/>
</dbReference>
<dbReference type="InterPro" id="IPR000719">
    <property type="entry name" value="Prot_kinase_dom"/>
</dbReference>
<dbReference type="InterPro" id="IPR017441">
    <property type="entry name" value="Protein_kinase_ATP_BS"/>
</dbReference>
<dbReference type="InterPro" id="IPR008271">
    <property type="entry name" value="Ser/Thr_kinase_AS"/>
</dbReference>
<dbReference type="PANTHER" id="PTHR24351">
    <property type="entry name" value="RIBOSOMAL PROTEIN S6 KINASE"/>
    <property type="match status" value="1"/>
</dbReference>
<dbReference type="Pfam" id="PF00130">
    <property type="entry name" value="C1_1"/>
    <property type="match status" value="2"/>
</dbReference>
<dbReference type="Pfam" id="PF21494">
    <property type="entry name" value="PKC_C2"/>
    <property type="match status" value="1"/>
</dbReference>
<dbReference type="Pfam" id="PF00069">
    <property type="entry name" value="Pkinase"/>
    <property type="match status" value="1"/>
</dbReference>
<dbReference type="Pfam" id="PF00433">
    <property type="entry name" value="Pkinase_C"/>
    <property type="match status" value="1"/>
</dbReference>
<dbReference type="PIRSF" id="PIRSF000551">
    <property type="entry name" value="PKC_delta"/>
    <property type="match status" value="1"/>
</dbReference>
<dbReference type="PIRSF" id="PIRSF501105">
    <property type="entry name" value="Protein_kin_C_theta"/>
    <property type="match status" value="1"/>
</dbReference>
<dbReference type="PRINTS" id="PR00008">
    <property type="entry name" value="DAGPEDOMAIN"/>
</dbReference>
<dbReference type="SMART" id="SM00109">
    <property type="entry name" value="C1"/>
    <property type="match status" value="2"/>
</dbReference>
<dbReference type="SMART" id="SM00133">
    <property type="entry name" value="S_TK_X"/>
    <property type="match status" value="1"/>
</dbReference>
<dbReference type="SMART" id="SM00220">
    <property type="entry name" value="S_TKc"/>
    <property type="match status" value="1"/>
</dbReference>
<dbReference type="SUPFAM" id="SSF49562">
    <property type="entry name" value="C2 domain (Calcium/lipid-binding domain, CaLB)"/>
    <property type="match status" value="1"/>
</dbReference>
<dbReference type="SUPFAM" id="SSF57889">
    <property type="entry name" value="Cysteine-rich domain"/>
    <property type="match status" value="2"/>
</dbReference>
<dbReference type="SUPFAM" id="SSF56112">
    <property type="entry name" value="Protein kinase-like (PK-like)"/>
    <property type="match status" value="1"/>
</dbReference>
<dbReference type="PROSITE" id="PS51285">
    <property type="entry name" value="AGC_KINASE_CTER"/>
    <property type="match status" value="1"/>
</dbReference>
<dbReference type="PROSITE" id="PS50004">
    <property type="entry name" value="C2"/>
    <property type="match status" value="1"/>
</dbReference>
<dbReference type="PROSITE" id="PS00107">
    <property type="entry name" value="PROTEIN_KINASE_ATP"/>
    <property type="match status" value="1"/>
</dbReference>
<dbReference type="PROSITE" id="PS50011">
    <property type="entry name" value="PROTEIN_KINASE_DOM"/>
    <property type="match status" value="1"/>
</dbReference>
<dbReference type="PROSITE" id="PS00108">
    <property type="entry name" value="PROTEIN_KINASE_ST"/>
    <property type="match status" value="1"/>
</dbReference>
<dbReference type="PROSITE" id="PS00479">
    <property type="entry name" value="ZF_DAG_PE_1"/>
    <property type="match status" value="2"/>
</dbReference>
<dbReference type="PROSITE" id="PS50081">
    <property type="entry name" value="ZF_DAG_PE_2"/>
    <property type="match status" value="2"/>
</dbReference>
<keyword id="KW-0002">3D-structure</keyword>
<keyword id="KW-0067">ATP-binding</keyword>
<keyword id="KW-1003">Cell membrane</keyword>
<keyword id="KW-0963">Cytoplasm</keyword>
<keyword id="KW-0391">Immunity</keyword>
<keyword id="KW-0395">Inflammatory response</keyword>
<keyword id="KW-0418">Kinase</keyword>
<keyword id="KW-0460">Magnesium</keyword>
<keyword id="KW-0472">Membrane</keyword>
<keyword id="KW-0479">Metal-binding</keyword>
<keyword id="KW-0547">Nucleotide-binding</keyword>
<keyword id="KW-0597">Phosphoprotein</keyword>
<keyword id="KW-1185">Reference proteome</keyword>
<keyword id="KW-0677">Repeat</keyword>
<keyword id="KW-0723">Serine/threonine-protein kinase</keyword>
<keyword id="KW-0808">Transferase</keyword>
<keyword id="KW-0862">Zinc</keyword>
<keyword id="KW-0863">Zinc-finger</keyword>